<accession>C3LFH9</accession>
<name>ATPB_BACAC</name>
<evidence type="ECO:0000255" key="1">
    <source>
        <dbReference type="HAMAP-Rule" id="MF_01347"/>
    </source>
</evidence>
<comment type="function">
    <text evidence="1">Produces ATP from ADP in the presence of a proton gradient across the membrane. The catalytic sites are hosted primarily by the beta subunits.</text>
</comment>
<comment type="catalytic activity">
    <reaction evidence="1">
        <text>ATP + H2O + 4 H(+)(in) = ADP + phosphate + 5 H(+)(out)</text>
        <dbReference type="Rhea" id="RHEA:57720"/>
        <dbReference type="ChEBI" id="CHEBI:15377"/>
        <dbReference type="ChEBI" id="CHEBI:15378"/>
        <dbReference type="ChEBI" id="CHEBI:30616"/>
        <dbReference type="ChEBI" id="CHEBI:43474"/>
        <dbReference type="ChEBI" id="CHEBI:456216"/>
        <dbReference type="EC" id="7.1.2.2"/>
    </reaction>
</comment>
<comment type="subunit">
    <text evidence="1">F-type ATPases have 2 components, CF(1) - the catalytic core - and CF(0) - the membrane proton channel. CF(1) has five subunits: alpha(3), beta(3), gamma(1), delta(1), epsilon(1). CF(0) has three main subunits: a(1), b(2) and c(9-12). The alpha and beta chains form an alternating ring which encloses part of the gamma chain. CF(1) is attached to CF(0) by a central stalk formed by the gamma and epsilon chains, while a peripheral stalk is formed by the delta and b chains.</text>
</comment>
<comment type="subcellular location">
    <subcellularLocation>
        <location evidence="1">Cell membrane</location>
        <topology evidence="1">Peripheral membrane protein</topology>
    </subcellularLocation>
</comment>
<comment type="similarity">
    <text evidence="1">Belongs to the ATPase alpha/beta chains family.</text>
</comment>
<protein>
    <recommendedName>
        <fullName evidence="1">ATP synthase subunit beta</fullName>
        <ecNumber evidence="1">7.1.2.2</ecNumber>
    </recommendedName>
    <alternativeName>
        <fullName evidence="1">ATP synthase F1 sector subunit beta</fullName>
    </alternativeName>
    <alternativeName>
        <fullName evidence="1">F-ATPase subunit beta</fullName>
    </alternativeName>
</protein>
<reference key="1">
    <citation type="submission" date="2008-10" db="EMBL/GenBank/DDBJ databases">
        <title>Genome sequence of Bacillus anthracis str. CDC 684.</title>
        <authorList>
            <person name="Dodson R.J."/>
            <person name="Munk A.C."/>
            <person name="Brettin T."/>
            <person name="Bruce D."/>
            <person name="Detter C."/>
            <person name="Tapia R."/>
            <person name="Han C."/>
            <person name="Sutton G."/>
            <person name="Sims D."/>
        </authorList>
    </citation>
    <scope>NUCLEOTIDE SEQUENCE [LARGE SCALE GENOMIC DNA]</scope>
    <source>
        <strain>CDC 684 / NRRL 3495</strain>
    </source>
</reference>
<proteinExistence type="inferred from homology"/>
<keyword id="KW-0066">ATP synthesis</keyword>
<keyword id="KW-0067">ATP-binding</keyword>
<keyword id="KW-1003">Cell membrane</keyword>
<keyword id="KW-0139">CF(1)</keyword>
<keyword id="KW-0375">Hydrogen ion transport</keyword>
<keyword id="KW-0406">Ion transport</keyword>
<keyword id="KW-0472">Membrane</keyword>
<keyword id="KW-0547">Nucleotide-binding</keyword>
<keyword id="KW-1278">Translocase</keyword>
<keyword id="KW-0813">Transport</keyword>
<feature type="chain" id="PRO_1000166569" description="ATP synthase subunit beta">
    <location>
        <begin position="1"/>
        <end position="469"/>
    </location>
</feature>
<feature type="binding site" evidence="1">
    <location>
        <begin position="156"/>
        <end position="163"/>
    </location>
    <ligand>
        <name>ATP</name>
        <dbReference type="ChEBI" id="CHEBI:30616"/>
    </ligand>
</feature>
<gene>
    <name evidence="1" type="primary">atpD</name>
    <name type="ordered locus">BAMEG_5594</name>
</gene>
<organism>
    <name type="scientific">Bacillus anthracis (strain CDC 684 / NRRL 3495)</name>
    <dbReference type="NCBI Taxonomy" id="568206"/>
    <lineage>
        <taxon>Bacteria</taxon>
        <taxon>Bacillati</taxon>
        <taxon>Bacillota</taxon>
        <taxon>Bacilli</taxon>
        <taxon>Bacillales</taxon>
        <taxon>Bacillaceae</taxon>
        <taxon>Bacillus</taxon>
        <taxon>Bacillus cereus group</taxon>
    </lineage>
</organism>
<dbReference type="EC" id="7.1.2.2" evidence="1"/>
<dbReference type="EMBL" id="CP001215">
    <property type="protein sequence ID" value="ACP12249.1"/>
    <property type="molecule type" value="Genomic_DNA"/>
</dbReference>
<dbReference type="RefSeq" id="WP_001032600.1">
    <property type="nucleotide sequence ID" value="NC_012581.1"/>
</dbReference>
<dbReference type="SMR" id="C3LFH9"/>
<dbReference type="GeneID" id="45025135"/>
<dbReference type="KEGG" id="bah:BAMEG_5594"/>
<dbReference type="HOGENOM" id="CLU_022398_0_2_9"/>
<dbReference type="GO" id="GO:0005886">
    <property type="term" value="C:plasma membrane"/>
    <property type="evidence" value="ECO:0007669"/>
    <property type="project" value="UniProtKB-SubCell"/>
</dbReference>
<dbReference type="GO" id="GO:0045259">
    <property type="term" value="C:proton-transporting ATP synthase complex"/>
    <property type="evidence" value="ECO:0007669"/>
    <property type="project" value="UniProtKB-KW"/>
</dbReference>
<dbReference type="GO" id="GO:0005524">
    <property type="term" value="F:ATP binding"/>
    <property type="evidence" value="ECO:0007669"/>
    <property type="project" value="UniProtKB-UniRule"/>
</dbReference>
<dbReference type="GO" id="GO:0016887">
    <property type="term" value="F:ATP hydrolysis activity"/>
    <property type="evidence" value="ECO:0007669"/>
    <property type="project" value="InterPro"/>
</dbReference>
<dbReference type="GO" id="GO:0046933">
    <property type="term" value="F:proton-transporting ATP synthase activity, rotational mechanism"/>
    <property type="evidence" value="ECO:0007669"/>
    <property type="project" value="UniProtKB-UniRule"/>
</dbReference>
<dbReference type="CDD" id="cd18110">
    <property type="entry name" value="ATP-synt_F1_beta_C"/>
    <property type="match status" value="1"/>
</dbReference>
<dbReference type="CDD" id="cd18115">
    <property type="entry name" value="ATP-synt_F1_beta_N"/>
    <property type="match status" value="1"/>
</dbReference>
<dbReference type="CDD" id="cd01133">
    <property type="entry name" value="F1-ATPase_beta_CD"/>
    <property type="match status" value="1"/>
</dbReference>
<dbReference type="FunFam" id="1.10.1140.10:FF:000001">
    <property type="entry name" value="ATP synthase subunit beta"/>
    <property type="match status" value="1"/>
</dbReference>
<dbReference type="FunFam" id="2.40.10.170:FF:000005">
    <property type="entry name" value="ATP synthase subunit beta"/>
    <property type="match status" value="1"/>
</dbReference>
<dbReference type="FunFam" id="3.40.50.300:FF:000004">
    <property type="entry name" value="ATP synthase subunit beta"/>
    <property type="match status" value="1"/>
</dbReference>
<dbReference type="Gene3D" id="2.40.10.170">
    <property type="match status" value="1"/>
</dbReference>
<dbReference type="Gene3D" id="1.10.1140.10">
    <property type="entry name" value="Bovine Mitochondrial F1-atpase, Atp Synthase Beta Chain, Chain D, domain 3"/>
    <property type="match status" value="1"/>
</dbReference>
<dbReference type="Gene3D" id="3.40.50.300">
    <property type="entry name" value="P-loop containing nucleotide triphosphate hydrolases"/>
    <property type="match status" value="1"/>
</dbReference>
<dbReference type="HAMAP" id="MF_01347">
    <property type="entry name" value="ATP_synth_beta_bact"/>
    <property type="match status" value="1"/>
</dbReference>
<dbReference type="InterPro" id="IPR003593">
    <property type="entry name" value="AAA+_ATPase"/>
</dbReference>
<dbReference type="InterPro" id="IPR055190">
    <property type="entry name" value="ATP-synt_VA_C"/>
</dbReference>
<dbReference type="InterPro" id="IPR005722">
    <property type="entry name" value="ATP_synth_F1_bsu"/>
</dbReference>
<dbReference type="InterPro" id="IPR020003">
    <property type="entry name" value="ATPase_a/bsu_AS"/>
</dbReference>
<dbReference type="InterPro" id="IPR050053">
    <property type="entry name" value="ATPase_alpha/beta_chains"/>
</dbReference>
<dbReference type="InterPro" id="IPR004100">
    <property type="entry name" value="ATPase_F1/V1/A1_a/bsu_N"/>
</dbReference>
<dbReference type="InterPro" id="IPR036121">
    <property type="entry name" value="ATPase_F1/V1/A1_a/bsu_N_sf"/>
</dbReference>
<dbReference type="InterPro" id="IPR000194">
    <property type="entry name" value="ATPase_F1/V1/A1_a/bsu_nucl-bd"/>
</dbReference>
<dbReference type="InterPro" id="IPR024034">
    <property type="entry name" value="ATPase_F1/V1_b/a_C"/>
</dbReference>
<dbReference type="InterPro" id="IPR027417">
    <property type="entry name" value="P-loop_NTPase"/>
</dbReference>
<dbReference type="NCBIfam" id="TIGR01039">
    <property type="entry name" value="atpD"/>
    <property type="match status" value="1"/>
</dbReference>
<dbReference type="PANTHER" id="PTHR15184">
    <property type="entry name" value="ATP SYNTHASE"/>
    <property type="match status" value="1"/>
</dbReference>
<dbReference type="PANTHER" id="PTHR15184:SF71">
    <property type="entry name" value="ATP SYNTHASE SUBUNIT BETA, MITOCHONDRIAL"/>
    <property type="match status" value="1"/>
</dbReference>
<dbReference type="Pfam" id="PF00006">
    <property type="entry name" value="ATP-synt_ab"/>
    <property type="match status" value="1"/>
</dbReference>
<dbReference type="Pfam" id="PF02874">
    <property type="entry name" value="ATP-synt_ab_N"/>
    <property type="match status" value="1"/>
</dbReference>
<dbReference type="Pfam" id="PF22919">
    <property type="entry name" value="ATP-synt_VA_C"/>
    <property type="match status" value="1"/>
</dbReference>
<dbReference type="SMART" id="SM00382">
    <property type="entry name" value="AAA"/>
    <property type="match status" value="1"/>
</dbReference>
<dbReference type="SUPFAM" id="SSF47917">
    <property type="entry name" value="C-terminal domain of alpha and beta subunits of F1 ATP synthase"/>
    <property type="match status" value="1"/>
</dbReference>
<dbReference type="SUPFAM" id="SSF50615">
    <property type="entry name" value="N-terminal domain of alpha and beta subunits of F1 ATP synthase"/>
    <property type="match status" value="1"/>
</dbReference>
<dbReference type="SUPFAM" id="SSF52540">
    <property type="entry name" value="P-loop containing nucleoside triphosphate hydrolases"/>
    <property type="match status" value="1"/>
</dbReference>
<dbReference type="PROSITE" id="PS00152">
    <property type="entry name" value="ATPASE_ALPHA_BETA"/>
    <property type="match status" value="1"/>
</dbReference>
<sequence>MNKGRVTQIMGPVVDVKFDGGKLPEIYNALTVKQSNENGTSINLTFEVALHLGDDTVRTVAMSSTDGLVRGTEVEDTGKAISVPVGDATLGRVFNVLGDAIDLDGEVPADVRRDPIHRQAPAFEELSTKVEILETGIKVVDLLAPYIKGGKIGLFGGAGVGKTVLIQELINNIAQEHGGISVFAGVGERTREGNDLYHEMSDSGVIKKTAMVFGQMNEPPGARQRVALTGLTMAEHFRDEQGQDVLLFIDNIFRFTQAGSEVSALLGRMPSAVGYQPTLATEMGQLQERITSTNKGSITSIQAVYVPADDYTDPAPATTFAHLDATTNLERRLTQMGIYPAVDPLASTSRALSPEIVGEEHYEVARQVQQTLQRYKELQDIIAILGMDELSEEDKLVVHRARRIQFFLSQNFHVAEQFTGQKGSYVPVKETVRGFKEILEGKYDDLPEDAFRLVGGIEEVIENAKKMMA</sequence>